<keyword id="KW-0238">DNA-binding</keyword>
<keyword id="KW-0945">Host-virus interaction</keyword>
<keyword id="KW-1080">Inhibition of host adaptive immune response by virus</keyword>
<keyword id="KW-1116">Inhibition of host MHC class II molecule presentation by virus</keyword>
<keyword id="KW-1185">Reference proteome</keyword>
<keyword id="KW-0804">Transcription</keyword>
<keyword id="KW-0805">Transcription regulation</keyword>
<keyword id="KW-0899">Viral immunoevasion</keyword>
<sequence length="566" mass="62508">MAGRRLTWISEFIVGALDSDKYPLVKWLDRSTGTFLAPAARNDVIPLDSLQFFIDFKRECLSKGLHPRDLLGSPITAFGKICTTSRRLRRLPGEEYEVVQGINCRRWRLLCAEVKECWWCVHARTHLHSGSSLWEILYQHSVRLEKHRRRPRPFVGENSDSSEEDHPAFCDVPVTQTGAESEDSGDEGPSTRHSASGVQPVDDANADSPGSGDEGPSTRHSDSQPPPADETTVHTDNVEDDLTLLDKESACALMYHVGQEMDMLMRAMCDEDLFDLLGIPEDVIATSQPGGDTDASGVVTEGSIAASAVGAGVEDVYLAGALEAQNVAGEYVLEISDEEVDDGAGLPPASRRRPVVGEFLWDDGPRRHERPTTRRIRHRKLRSAYYRVARPPVMITDRLGVEVFYFGRPAMSLEVERKVFILCSQNPLADISHSCLHSRKGLRVLLPKPDDNNTGPGDVNLLAAVLRSFASGLVIVSLRSGIYVKNLCKSTVLYHGNNPPKKFGVICGLSSRAVLDVFNVAQYRIQGHEHIKKTTVFIGGDPTSAEQFDMVPLVIKLRLRSVTCDD</sequence>
<proteinExistence type="evidence at protein level"/>
<evidence type="ECO:0000255" key="1">
    <source>
        <dbReference type="PROSITE-ProRule" id="PRU00840"/>
    </source>
</evidence>
<evidence type="ECO:0000256" key="2">
    <source>
        <dbReference type="SAM" id="MobiDB-lite"/>
    </source>
</evidence>
<evidence type="ECO:0000269" key="3">
    <source>
    </source>
</evidence>
<evidence type="ECO:0000269" key="4">
    <source>
    </source>
</evidence>
<evidence type="ECO:0000269" key="5">
    <source>
    </source>
</evidence>
<evidence type="ECO:0000269" key="6">
    <source>
    </source>
</evidence>
<dbReference type="EMBL" id="AF148805">
    <property type="protein sequence ID" value="ABD28911.1"/>
    <property type="molecule type" value="Genomic_DNA"/>
</dbReference>
<dbReference type="RefSeq" id="YP_001129413.1">
    <property type="nucleotide sequence ID" value="NC_009333.1"/>
</dbReference>
<dbReference type="SMR" id="F5HIC6"/>
<dbReference type="BioGRID" id="1776996">
    <property type="interactions" value="9"/>
</dbReference>
<dbReference type="DNASU" id="4961493"/>
<dbReference type="GeneID" id="4961493"/>
<dbReference type="KEGG" id="vg:4961493"/>
<dbReference type="Proteomes" id="UP000000942">
    <property type="component" value="Segment"/>
</dbReference>
<dbReference type="GO" id="GO:0000976">
    <property type="term" value="F:transcription cis-regulatory region binding"/>
    <property type="evidence" value="ECO:0007669"/>
    <property type="project" value="InterPro"/>
</dbReference>
<dbReference type="GO" id="GO:0039505">
    <property type="term" value="P:symbiont-mediated suppression of host antigen processing and presentation of peptide antigen via MHC class II"/>
    <property type="evidence" value="ECO:0007669"/>
    <property type="project" value="UniProtKB-KW"/>
</dbReference>
<dbReference type="Gene3D" id="2.60.200.10">
    <property type="match status" value="1"/>
</dbReference>
<dbReference type="Gene3D" id="1.10.10.10">
    <property type="entry name" value="Winged helix-like DNA-binding domain superfamily/Winged helix DNA-binding domain"/>
    <property type="match status" value="1"/>
</dbReference>
<dbReference type="InterPro" id="IPR001346">
    <property type="entry name" value="Interferon_reg_fact_DNA-bd_dom"/>
</dbReference>
<dbReference type="InterPro" id="IPR017855">
    <property type="entry name" value="SMAD-like_dom_sf"/>
</dbReference>
<dbReference type="InterPro" id="IPR008984">
    <property type="entry name" value="SMAD_FHA_dom_sf"/>
</dbReference>
<dbReference type="InterPro" id="IPR036388">
    <property type="entry name" value="WH-like_DNA-bd_sf"/>
</dbReference>
<dbReference type="SUPFAM" id="SSF49879">
    <property type="entry name" value="SMAD/FHA domain"/>
    <property type="match status" value="1"/>
</dbReference>
<dbReference type="PROSITE" id="PS51507">
    <property type="entry name" value="IRF_2"/>
    <property type="match status" value="1"/>
</dbReference>
<comment type="function">
    <text evidence="3 4 5">Plays a role in the inhibition of host immune response. Interferes with the transactivating potential of cellular IRFs IRF3 and IRF7 that play a critical role in the induction of IFNA and IFNB genes. Additionally, interferes with surface major histocompatibility complex class II (MHC-II) antigen presentation.</text>
</comment>
<comment type="subunit">
    <text evidence="4 6">Interacts with host SKP2 (PubMed:22453922). Interacts with host USP7 (PubMed:29343584).</text>
</comment>
<comment type="similarity">
    <text evidence="1">Belongs to the IRF family.</text>
</comment>
<organism>
    <name type="scientific">Human herpesvirus 8 type P (isolate GK18)</name>
    <name type="common">HHV-8</name>
    <name type="synonym">Kaposi's sarcoma-associated herpesvirus</name>
    <dbReference type="NCBI Taxonomy" id="868565"/>
    <lineage>
        <taxon>Viruses</taxon>
        <taxon>Duplodnaviria</taxon>
        <taxon>Heunggongvirae</taxon>
        <taxon>Peploviricota</taxon>
        <taxon>Herviviricetes</taxon>
        <taxon>Herpesvirales</taxon>
        <taxon>Orthoherpesviridae</taxon>
        <taxon>Gammaherpesvirinae</taxon>
        <taxon>Rhadinovirus</taxon>
        <taxon>Rhadinovirus humangamma8</taxon>
        <taxon>Human herpesvirus 8</taxon>
    </lineage>
</organism>
<name>VIRF3_HHV8P</name>
<protein>
    <recommendedName>
        <fullName>Viral IRF3-like protein</fullName>
        <shortName>VIRF-3</shortName>
    </recommendedName>
</protein>
<organismHost>
    <name type="scientific">Homo sapiens</name>
    <name type="common">Human</name>
    <dbReference type="NCBI Taxonomy" id="9606"/>
</organismHost>
<gene>
    <name type="primary">vIRF-3</name>
</gene>
<accession>F5HIC6</accession>
<feature type="chain" id="PRO_0000423779" description="Viral IRF3-like protein">
    <location>
        <begin position="1"/>
        <end position="566"/>
    </location>
</feature>
<feature type="region of interest" description="Disordered" evidence="2">
    <location>
        <begin position="151"/>
        <end position="170"/>
    </location>
</feature>
<feature type="region of interest" description="Disordered" evidence="2">
    <location>
        <begin position="176"/>
        <end position="236"/>
    </location>
</feature>
<reference key="1">
    <citation type="journal article" date="1999" name="J. Virol.">
        <title>Identification of a spliced gene from Kaposi's sarcoma-associated herpesvirus encoding a protein with similarities to latent membrane proteins 1 and 2A of Epstein-Barr virus.</title>
        <authorList>
            <person name="Glenn M."/>
            <person name="Rainbow L."/>
            <person name="Aurade F."/>
            <person name="Davison A."/>
            <person name="Schulz T.F."/>
        </authorList>
    </citation>
    <scope>NUCLEOTIDE SEQUENCE [LARGE SCALE GENOMIC DNA]</scope>
</reference>
<reference key="2">
    <citation type="journal article" date="2006" name="J. Gen. Virol.">
        <title>Kaposi's sarcoma-associated herpesvirus immune modulation: an overview.</title>
        <authorList>
            <person name="Rezaee S.A.R."/>
            <person name="Cunningham C."/>
            <person name="Davison A.J."/>
            <person name="Blackbourn D.J."/>
        </authorList>
    </citation>
    <scope>NUCLEOTIDE SEQUENCE [LARGE SCALE GENOMIC DNA]</scope>
</reference>
<reference key="3">
    <citation type="journal article" date="2000" name="J. Virol.">
        <title>Characterization of a novel human herpesvirus 8-encoded protein, vIRF-3, that shows homology to viral and cellular interferon regulatory factors.</title>
        <authorList>
            <person name="Lubyova B."/>
            <person name="Pitha P.M."/>
        </authorList>
    </citation>
    <scope>FUNCTION</scope>
</reference>
<reference key="4">
    <citation type="journal article" date="2012" name="J. Biol. Chem.">
        <title>Kaposi sarcoma-associated herpesvirus vIRF-3 protein binds to F-box of Skp2 protein and acts as a regulator of c-Myc protein function and stability.</title>
        <authorList>
            <person name="Baresova P."/>
            <person name="Pitha P.M."/>
            <person name="Lubyova B."/>
        </authorList>
    </citation>
    <scope>FUNCTION</scope>
    <scope>INTERACTION WITH HOST SKP2</scope>
</reference>
<reference key="5">
    <citation type="journal article" date="2013" name="J. Virol.">
        <title>Kaposi's sarcoma-associated herpesvirus-encoded viral IRF3 modulates major histocompatibility complex class II (MHC-II) antigen presentation through MHC-II transactivator-dependent and -independent mechanisms: implications for oncogenesis.</title>
        <authorList>
            <person name="Zuo J."/>
            <person name="Hislop A.D."/>
            <person name="Leung C.S."/>
            <person name="Sabbah S."/>
            <person name="Rowe M."/>
        </authorList>
    </citation>
    <scope>FUNCTION</scope>
</reference>
<reference key="6">
    <citation type="journal article" date="2018" name="J. Virol.">
        <title>Human Herpesvirus 8 Interferon Regulatory Factors 1 and 3 Mediate Replication and Latency Activities via Interactions with USP7 Deubiquitinase.</title>
        <authorList>
            <person name="Xiang Q."/>
            <person name="Ju H."/>
            <person name="Li Q."/>
            <person name="Mei S.C."/>
            <person name="Chen D."/>
            <person name="Choi Y.B."/>
            <person name="Nicholas J."/>
        </authorList>
    </citation>
    <scope>INTERACTION WITH HOST USP7</scope>
</reference>